<sequence length="82" mass="9375">MIIKEFLATEKAVKLIESQNTLTIIVNRNTTKKDIKNEVEKLFSVKVEKINTLITPKGEKKAYVKLKQEYKASDVAHKLGML</sequence>
<protein>
    <recommendedName>
        <fullName evidence="1">Large ribosomal subunit protein uL23</fullName>
    </recommendedName>
    <alternativeName>
        <fullName evidence="2">50S ribosomal protein L23</fullName>
    </alternativeName>
</protein>
<gene>
    <name evidence="1" type="primary">rpl23</name>
    <name type="ordered locus">Saci_0595</name>
</gene>
<accession>Q4JB42</accession>
<evidence type="ECO:0000255" key="1">
    <source>
        <dbReference type="HAMAP-Rule" id="MF_01369"/>
    </source>
</evidence>
<evidence type="ECO:0000305" key="2"/>
<organism>
    <name type="scientific">Sulfolobus acidocaldarius (strain ATCC 33909 / DSM 639 / JCM 8929 / NBRC 15157 / NCIMB 11770)</name>
    <dbReference type="NCBI Taxonomy" id="330779"/>
    <lineage>
        <taxon>Archaea</taxon>
        <taxon>Thermoproteota</taxon>
        <taxon>Thermoprotei</taxon>
        <taxon>Sulfolobales</taxon>
        <taxon>Sulfolobaceae</taxon>
        <taxon>Sulfolobus</taxon>
    </lineage>
</organism>
<dbReference type="EMBL" id="CP000077">
    <property type="protein sequence ID" value="AAY79987.1"/>
    <property type="molecule type" value="Genomic_DNA"/>
</dbReference>
<dbReference type="RefSeq" id="WP_011277489.1">
    <property type="nucleotide sequence ID" value="NC_007181.1"/>
</dbReference>
<dbReference type="PDB" id="8HKU">
    <property type="method" value="EM"/>
    <property type="resolution" value="2.72 A"/>
    <property type="chains" value="L23P=2-82"/>
</dbReference>
<dbReference type="PDB" id="8HKV">
    <property type="method" value="EM"/>
    <property type="resolution" value="4.94 A"/>
    <property type="chains" value="L23P=2-82"/>
</dbReference>
<dbReference type="PDB" id="8HKY">
    <property type="method" value="EM"/>
    <property type="resolution" value="4.45 A"/>
    <property type="chains" value="L23P=2-82"/>
</dbReference>
<dbReference type="PDB" id="8HKZ">
    <property type="method" value="EM"/>
    <property type="resolution" value="4.78 A"/>
    <property type="chains" value="L23P=2-82"/>
</dbReference>
<dbReference type="PDB" id="8HL1">
    <property type="method" value="EM"/>
    <property type="resolution" value="3.93 A"/>
    <property type="chains" value="L23P=2-82"/>
</dbReference>
<dbReference type="PDB" id="8HL2">
    <property type="method" value="EM"/>
    <property type="resolution" value="4.10 A"/>
    <property type="chains" value="L23P=2-82"/>
</dbReference>
<dbReference type="PDB" id="8HL3">
    <property type="method" value="EM"/>
    <property type="resolution" value="4.80 A"/>
    <property type="chains" value="L23P=2-82"/>
</dbReference>
<dbReference type="PDB" id="8HL4">
    <property type="method" value="EM"/>
    <property type="resolution" value="4.62 A"/>
    <property type="chains" value="L23P=2-82"/>
</dbReference>
<dbReference type="PDB" id="8HL5">
    <property type="method" value="EM"/>
    <property type="resolution" value="5.72 A"/>
    <property type="chains" value="L23P=2-82"/>
</dbReference>
<dbReference type="PDBsum" id="8HKU"/>
<dbReference type="PDBsum" id="8HKV"/>
<dbReference type="PDBsum" id="8HKY"/>
<dbReference type="PDBsum" id="8HKZ"/>
<dbReference type="PDBsum" id="8HL1"/>
<dbReference type="PDBsum" id="8HL2"/>
<dbReference type="PDBsum" id="8HL3"/>
<dbReference type="PDBsum" id="8HL4"/>
<dbReference type="PDBsum" id="8HL5"/>
<dbReference type="EMDB" id="EMD-34860"/>
<dbReference type="EMDB" id="EMD-34861"/>
<dbReference type="EMDB" id="EMD-34863"/>
<dbReference type="EMDB" id="EMD-34864"/>
<dbReference type="EMDB" id="EMD-34866"/>
<dbReference type="EMDB" id="EMD-34867"/>
<dbReference type="EMDB" id="EMD-34868"/>
<dbReference type="EMDB" id="EMD-34869"/>
<dbReference type="EMDB" id="EMD-34870"/>
<dbReference type="SMR" id="Q4JB42"/>
<dbReference type="STRING" id="330779.Saci_0595"/>
<dbReference type="GeneID" id="14551116"/>
<dbReference type="KEGG" id="sai:Saci_0595"/>
<dbReference type="PATRIC" id="fig|330779.12.peg.574"/>
<dbReference type="eggNOG" id="arCOG04072">
    <property type="taxonomic scope" value="Archaea"/>
</dbReference>
<dbReference type="HOGENOM" id="CLU_037562_4_2_2"/>
<dbReference type="Proteomes" id="UP000001018">
    <property type="component" value="Chromosome"/>
</dbReference>
<dbReference type="GO" id="GO:1990904">
    <property type="term" value="C:ribonucleoprotein complex"/>
    <property type="evidence" value="ECO:0007669"/>
    <property type="project" value="UniProtKB-KW"/>
</dbReference>
<dbReference type="GO" id="GO:0005840">
    <property type="term" value="C:ribosome"/>
    <property type="evidence" value="ECO:0007669"/>
    <property type="project" value="UniProtKB-KW"/>
</dbReference>
<dbReference type="GO" id="GO:0019843">
    <property type="term" value="F:rRNA binding"/>
    <property type="evidence" value="ECO:0007669"/>
    <property type="project" value="UniProtKB-UniRule"/>
</dbReference>
<dbReference type="GO" id="GO:0003735">
    <property type="term" value="F:structural constituent of ribosome"/>
    <property type="evidence" value="ECO:0007669"/>
    <property type="project" value="InterPro"/>
</dbReference>
<dbReference type="GO" id="GO:0006412">
    <property type="term" value="P:translation"/>
    <property type="evidence" value="ECO:0007669"/>
    <property type="project" value="UniProtKB-UniRule"/>
</dbReference>
<dbReference type="FunFam" id="3.30.70.330:FF:000532">
    <property type="entry name" value="50S ribosomal protein L23"/>
    <property type="match status" value="1"/>
</dbReference>
<dbReference type="Gene3D" id="3.30.70.330">
    <property type="match status" value="1"/>
</dbReference>
<dbReference type="HAMAP" id="MF_01369_A">
    <property type="entry name" value="Ribosomal_uL23_A"/>
    <property type="match status" value="1"/>
</dbReference>
<dbReference type="InterPro" id="IPR012677">
    <property type="entry name" value="Nucleotide-bd_a/b_plait_sf"/>
</dbReference>
<dbReference type="InterPro" id="IPR019985">
    <property type="entry name" value="Ribosomal_uL23"/>
</dbReference>
<dbReference type="InterPro" id="IPR013025">
    <property type="entry name" value="Ribosomal_uL23-like"/>
</dbReference>
<dbReference type="InterPro" id="IPR012678">
    <property type="entry name" value="Ribosomal_uL23/eL15/eS24_sf"/>
</dbReference>
<dbReference type="InterPro" id="IPR001014">
    <property type="entry name" value="Ribosomal_uL23_CS"/>
</dbReference>
<dbReference type="NCBIfam" id="NF011118">
    <property type="entry name" value="PRK14548.1"/>
    <property type="match status" value="1"/>
</dbReference>
<dbReference type="NCBIfam" id="TIGR03636">
    <property type="entry name" value="uL23_arch"/>
    <property type="match status" value="1"/>
</dbReference>
<dbReference type="PANTHER" id="PTHR11620">
    <property type="entry name" value="60S RIBOSOMAL PROTEIN L23A"/>
    <property type="match status" value="1"/>
</dbReference>
<dbReference type="Pfam" id="PF00276">
    <property type="entry name" value="Ribosomal_L23"/>
    <property type="match status" value="1"/>
</dbReference>
<dbReference type="SUPFAM" id="SSF54189">
    <property type="entry name" value="Ribosomal proteins S24e, L23 and L15e"/>
    <property type="match status" value="1"/>
</dbReference>
<dbReference type="PROSITE" id="PS00050">
    <property type="entry name" value="RIBOSOMAL_L23"/>
    <property type="match status" value="1"/>
</dbReference>
<comment type="function">
    <text evidence="1">Binds to 23S rRNA. One of the proteins that surrounds the polypeptide exit tunnel on the outside of the ribosome.</text>
</comment>
<comment type="subunit">
    <text evidence="1">Part of the 50S ribosomal subunit. Contacts protein L29.</text>
</comment>
<comment type="similarity">
    <text evidence="1">Belongs to the universal ribosomal protein uL23 family.</text>
</comment>
<reference key="1">
    <citation type="journal article" date="2005" name="J. Bacteriol.">
        <title>The genome of Sulfolobus acidocaldarius, a model organism of the Crenarchaeota.</title>
        <authorList>
            <person name="Chen L."/>
            <person name="Bruegger K."/>
            <person name="Skovgaard M."/>
            <person name="Redder P."/>
            <person name="She Q."/>
            <person name="Torarinsson E."/>
            <person name="Greve B."/>
            <person name="Awayez M."/>
            <person name="Zibat A."/>
            <person name="Klenk H.-P."/>
            <person name="Garrett R.A."/>
        </authorList>
    </citation>
    <scope>NUCLEOTIDE SEQUENCE [LARGE SCALE GENOMIC DNA]</scope>
    <source>
        <strain>ATCC 33909 / DSM 639 / JCM 8929 / NBRC 15157 / NCIMB 11770</strain>
    </source>
</reference>
<proteinExistence type="evidence at protein level"/>
<keyword id="KW-0002">3D-structure</keyword>
<keyword id="KW-1185">Reference proteome</keyword>
<keyword id="KW-0687">Ribonucleoprotein</keyword>
<keyword id="KW-0689">Ribosomal protein</keyword>
<keyword id="KW-0694">RNA-binding</keyword>
<keyword id="KW-0699">rRNA-binding</keyword>
<feature type="chain" id="PRO_0000272955" description="Large ribosomal subunit protein uL23">
    <location>
        <begin position="1"/>
        <end position="82"/>
    </location>
</feature>
<name>RL23_SULAC</name>